<comment type="function">
    <text evidence="4">Might mediate the very first reaction in teichuronic synthesis, i.e. the formation of lipid-linked N-acetylglucosamine.</text>
</comment>
<comment type="catalytic activity">
    <reaction evidence="4">
        <text>di-trans,octa-cis-undecaprenyl phosphate + UDP-N-acetyl-alpha-D-galactosamine = N-acetyl-alpha-D-galactosaminyl-di-trans,octa-cis-undecaprenyl diphosphate + UMP</text>
        <dbReference type="Rhea" id="RHEA:36787"/>
        <dbReference type="ChEBI" id="CHEBI:57865"/>
        <dbReference type="ChEBI" id="CHEBI:60392"/>
        <dbReference type="ChEBI" id="CHEBI:67138"/>
        <dbReference type="ChEBI" id="CHEBI:74214"/>
        <dbReference type="EC" id="2.7.8.40"/>
    </reaction>
</comment>
<comment type="pathway">
    <text evidence="4">Cell wall biogenesis; teichuronic acid biosynthesis.</text>
</comment>
<comment type="subcellular location">
    <subcellularLocation>
        <location evidence="3">Cell membrane</location>
        <topology evidence="3">Single-pass membrane protein</topology>
    </subcellularLocation>
</comment>
<comment type="induction">
    <text evidence="2">By phosphate starvation, via the PhoP/PhoR two-component regulatory system.</text>
</comment>
<comment type="miscellaneous">
    <text evidence="4">The nature of the anionic polymer present in the cell wall of B.subtilis depends on phosphate availability. Under phosphate-replete growth conditions teichoic acids are present, whereas under phosphate-depleted conditions, at least part of the wall teichoic acid is replaced with teichuronic acid, a non-phosphate containing anionic polymer. The synthesis of teichuronic acid is accompanied by degradation of teichoic acid and reutilization of liberated phosphate for other cellular processes such as nucleic acid synthesis.</text>
</comment>
<comment type="similarity">
    <text evidence="3">Belongs to the bacterial sugar transferase family.</text>
</comment>
<name>TUAA_BACSU</name>
<feature type="chain" id="PRO_0000166469" description="Putative undecaprenyl-phosphate N-acetylgalactosaminyl 1-phosphate transferase">
    <location>
        <begin position="1"/>
        <end position="179"/>
    </location>
</feature>
<feature type="transmembrane region" description="Helical" evidence="1">
    <location>
        <begin position="39"/>
        <end position="59"/>
    </location>
</feature>
<evidence type="ECO:0000255" key="1"/>
<evidence type="ECO:0000269" key="2">
    <source>
    </source>
</evidence>
<evidence type="ECO:0000305" key="3"/>
<evidence type="ECO:0000305" key="4">
    <source>
    </source>
</evidence>
<organism>
    <name type="scientific">Bacillus subtilis (strain 168)</name>
    <dbReference type="NCBI Taxonomy" id="224308"/>
    <lineage>
        <taxon>Bacteria</taxon>
        <taxon>Bacillati</taxon>
        <taxon>Bacillota</taxon>
        <taxon>Bacilli</taxon>
        <taxon>Bacillales</taxon>
        <taxon>Bacillaceae</taxon>
        <taxon>Bacillus</taxon>
    </lineage>
</organism>
<dbReference type="EC" id="2.7.8.40" evidence="4"/>
<dbReference type="EMBL" id="AF015609">
    <property type="protein sequence ID" value="AAB94862.1"/>
    <property type="molecule type" value="Genomic_DNA"/>
</dbReference>
<dbReference type="EMBL" id="AL009126">
    <property type="status" value="NOT_ANNOTATED_CDS"/>
    <property type="molecule type" value="Genomic_DNA"/>
</dbReference>
<dbReference type="PIR" id="C69727">
    <property type="entry name" value="C69727"/>
</dbReference>
<dbReference type="SMR" id="O32274"/>
<dbReference type="FunCoup" id="O32274">
    <property type="interactions" value="11"/>
</dbReference>
<dbReference type="PATRIC" id="fig|224308.179.peg.3852"/>
<dbReference type="InParanoid" id="O32274"/>
<dbReference type="BioCyc" id="MetaCyc:MONOMER-20033"/>
<dbReference type="UniPathway" id="UPA00844"/>
<dbReference type="Proteomes" id="UP000001570">
    <property type="component" value="Chromosome"/>
</dbReference>
<dbReference type="GO" id="GO:0005886">
    <property type="term" value="C:plasma membrane"/>
    <property type="evidence" value="ECO:0007669"/>
    <property type="project" value="UniProtKB-SubCell"/>
</dbReference>
<dbReference type="GO" id="GO:0016757">
    <property type="term" value="F:glycosyltransferase activity"/>
    <property type="evidence" value="ECO:0007669"/>
    <property type="project" value="UniProtKB-KW"/>
</dbReference>
<dbReference type="GO" id="GO:0016780">
    <property type="term" value="F:phosphotransferase activity, for other substituted phosphate groups"/>
    <property type="evidence" value="ECO:0000318"/>
    <property type="project" value="GO_Central"/>
</dbReference>
<dbReference type="GO" id="GO:0071555">
    <property type="term" value="P:cell wall organization"/>
    <property type="evidence" value="ECO:0007669"/>
    <property type="project" value="UniProtKB-KW"/>
</dbReference>
<dbReference type="GO" id="GO:0050845">
    <property type="term" value="P:teichuronic acid biosynthetic process"/>
    <property type="evidence" value="ECO:0007669"/>
    <property type="project" value="UniProtKB-UniPathway"/>
</dbReference>
<dbReference type="InterPro" id="IPR003362">
    <property type="entry name" value="Bact_transf"/>
</dbReference>
<dbReference type="PANTHER" id="PTHR30576">
    <property type="entry name" value="COLANIC BIOSYNTHESIS UDP-GLUCOSE LIPID CARRIER TRANSFERASE"/>
    <property type="match status" value="1"/>
</dbReference>
<dbReference type="PANTHER" id="PTHR30576:SF0">
    <property type="entry name" value="UNDECAPRENYL-PHOSPHATE N-ACETYLGALACTOSAMINYL 1-PHOSPHATE TRANSFERASE-RELATED"/>
    <property type="match status" value="1"/>
</dbReference>
<dbReference type="Pfam" id="PF02397">
    <property type="entry name" value="Bac_transf"/>
    <property type="match status" value="1"/>
</dbReference>
<proteinExistence type="evidence at transcript level"/>
<gene>
    <name type="primary">tuaA</name>
    <name type="synonym">yvhA</name>
    <name type="ordered locus">BSU35610</name>
</gene>
<accession>O32274</accession>
<reference key="1">
    <citation type="journal article" date="1999" name="Mol. Microbiol.">
        <title>Teichuronic acid operon of Bacillus subtilis 168.</title>
        <authorList>
            <person name="Soldo B."/>
            <person name="Lazarevic V."/>
            <person name="Pagni M."/>
            <person name="Karamata D."/>
        </authorList>
    </citation>
    <scope>NUCLEOTIDE SEQUENCE [GENOMIC DNA]</scope>
    <scope>PUTATIVE FUNCTION</scope>
    <scope>INDUCTION</scope>
    <source>
        <strain>168</strain>
    </source>
</reference>
<reference key="2">
    <citation type="journal article" date="1997" name="Nature">
        <title>The complete genome sequence of the Gram-positive bacterium Bacillus subtilis.</title>
        <authorList>
            <person name="Kunst F."/>
            <person name="Ogasawara N."/>
            <person name="Moszer I."/>
            <person name="Albertini A.M."/>
            <person name="Alloni G."/>
            <person name="Azevedo V."/>
            <person name="Bertero M.G."/>
            <person name="Bessieres P."/>
            <person name="Bolotin A."/>
            <person name="Borchert S."/>
            <person name="Borriss R."/>
            <person name="Boursier L."/>
            <person name="Brans A."/>
            <person name="Braun M."/>
            <person name="Brignell S.C."/>
            <person name="Bron S."/>
            <person name="Brouillet S."/>
            <person name="Bruschi C.V."/>
            <person name="Caldwell B."/>
            <person name="Capuano V."/>
            <person name="Carter N.M."/>
            <person name="Choi S.-K."/>
            <person name="Codani J.-J."/>
            <person name="Connerton I.F."/>
            <person name="Cummings N.J."/>
            <person name="Daniel R.A."/>
            <person name="Denizot F."/>
            <person name="Devine K.M."/>
            <person name="Duesterhoeft A."/>
            <person name="Ehrlich S.D."/>
            <person name="Emmerson P.T."/>
            <person name="Entian K.-D."/>
            <person name="Errington J."/>
            <person name="Fabret C."/>
            <person name="Ferrari E."/>
            <person name="Foulger D."/>
            <person name="Fritz C."/>
            <person name="Fujita M."/>
            <person name="Fujita Y."/>
            <person name="Fuma S."/>
            <person name="Galizzi A."/>
            <person name="Galleron N."/>
            <person name="Ghim S.-Y."/>
            <person name="Glaser P."/>
            <person name="Goffeau A."/>
            <person name="Golightly E.J."/>
            <person name="Grandi G."/>
            <person name="Guiseppi G."/>
            <person name="Guy B.J."/>
            <person name="Haga K."/>
            <person name="Haiech J."/>
            <person name="Harwood C.R."/>
            <person name="Henaut A."/>
            <person name="Hilbert H."/>
            <person name="Holsappel S."/>
            <person name="Hosono S."/>
            <person name="Hullo M.-F."/>
            <person name="Itaya M."/>
            <person name="Jones L.-M."/>
            <person name="Joris B."/>
            <person name="Karamata D."/>
            <person name="Kasahara Y."/>
            <person name="Klaerr-Blanchard M."/>
            <person name="Klein C."/>
            <person name="Kobayashi Y."/>
            <person name="Koetter P."/>
            <person name="Koningstein G."/>
            <person name="Krogh S."/>
            <person name="Kumano M."/>
            <person name="Kurita K."/>
            <person name="Lapidus A."/>
            <person name="Lardinois S."/>
            <person name="Lauber J."/>
            <person name="Lazarevic V."/>
            <person name="Lee S.-M."/>
            <person name="Levine A."/>
            <person name="Liu H."/>
            <person name="Masuda S."/>
            <person name="Mauel C."/>
            <person name="Medigue C."/>
            <person name="Medina N."/>
            <person name="Mellado R.P."/>
            <person name="Mizuno M."/>
            <person name="Moestl D."/>
            <person name="Nakai S."/>
            <person name="Noback M."/>
            <person name="Noone D."/>
            <person name="O'Reilly M."/>
            <person name="Ogawa K."/>
            <person name="Ogiwara A."/>
            <person name="Oudega B."/>
            <person name="Park S.-H."/>
            <person name="Parro V."/>
            <person name="Pohl T.M."/>
            <person name="Portetelle D."/>
            <person name="Porwollik S."/>
            <person name="Prescott A.M."/>
            <person name="Presecan E."/>
            <person name="Pujic P."/>
            <person name="Purnelle B."/>
            <person name="Rapoport G."/>
            <person name="Rey M."/>
            <person name="Reynolds S."/>
            <person name="Rieger M."/>
            <person name="Rivolta C."/>
            <person name="Rocha E."/>
            <person name="Roche B."/>
            <person name="Rose M."/>
            <person name="Sadaie Y."/>
            <person name="Sato T."/>
            <person name="Scanlan E."/>
            <person name="Schleich S."/>
            <person name="Schroeter R."/>
            <person name="Scoffone F."/>
            <person name="Sekiguchi J."/>
            <person name="Sekowska A."/>
            <person name="Seror S.J."/>
            <person name="Serror P."/>
            <person name="Shin B.-S."/>
            <person name="Soldo B."/>
            <person name="Sorokin A."/>
            <person name="Tacconi E."/>
            <person name="Takagi T."/>
            <person name="Takahashi H."/>
            <person name="Takemaru K."/>
            <person name="Takeuchi M."/>
            <person name="Tamakoshi A."/>
            <person name="Tanaka T."/>
            <person name="Terpstra P."/>
            <person name="Tognoni A."/>
            <person name="Tosato V."/>
            <person name="Uchiyama S."/>
            <person name="Vandenbol M."/>
            <person name="Vannier F."/>
            <person name="Vassarotti A."/>
            <person name="Viari A."/>
            <person name="Wambutt R."/>
            <person name="Wedler E."/>
            <person name="Wedler H."/>
            <person name="Weitzenegger T."/>
            <person name="Winters P."/>
            <person name="Wipat A."/>
            <person name="Yamamoto H."/>
            <person name="Yamane K."/>
            <person name="Yasumoto K."/>
            <person name="Yata K."/>
            <person name="Yoshida K."/>
            <person name="Yoshikawa H.-F."/>
            <person name="Zumstein E."/>
            <person name="Yoshikawa H."/>
            <person name="Danchin A."/>
        </authorList>
    </citation>
    <scope>NUCLEOTIDE SEQUENCE [LARGE SCALE GENOMIC DNA]</scope>
    <source>
        <strain>168</strain>
    </source>
</reference>
<sequence length="179" mass="20323">MSAEKSMNVSREFSVQQIHSFTLSEKTARYLAIKRVMDIWFALIGLAIALPMIAVFSILICLETPGPAIYTQERVGKGGKPFKLYKLRSMKIDAEKSGAVWAQKQDPRVTRIGAFIRRTRIDELPQLFNVLKGDMSMIGPRPERPVFTEKFQNEIPGFTQRLGSGERRLRYDAEGKADI</sequence>
<protein>
    <recommendedName>
        <fullName evidence="4">Putative undecaprenyl-phosphate N-acetylgalactosaminyl 1-phosphate transferase</fullName>
        <ecNumber evidence="4">2.7.8.40</ecNumber>
    </recommendedName>
    <alternativeName>
        <fullName>Teichuronic acid biosynthesis protein TuaA</fullName>
    </alternativeName>
    <alternativeName>
        <fullName>UDP-GalNAc:undecaprenyl-P GalNAc-1-P transferase</fullName>
    </alternativeName>
</protein>
<keyword id="KW-1003">Cell membrane</keyword>
<keyword id="KW-0961">Cell wall biogenesis/degradation</keyword>
<keyword id="KW-0328">Glycosyltransferase</keyword>
<keyword id="KW-0472">Membrane</keyword>
<keyword id="KW-1185">Reference proteome</keyword>
<keyword id="KW-0346">Stress response</keyword>
<keyword id="KW-0808">Transferase</keyword>
<keyword id="KW-0812">Transmembrane</keyword>
<keyword id="KW-1133">Transmembrane helix</keyword>